<organism>
    <name type="scientific">Mus pahari</name>
    <name type="common">Gairdner's shrew-mouse</name>
    <name type="synonym">Coelomys pahari</name>
    <dbReference type="NCBI Taxonomy" id="10093"/>
    <lineage>
        <taxon>Eukaryota</taxon>
        <taxon>Metazoa</taxon>
        <taxon>Chordata</taxon>
        <taxon>Craniata</taxon>
        <taxon>Vertebrata</taxon>
        <taxon>Euteleostomi</taxon>
        <taxon>Mammalia</taxon>
        <taxon>Eutheria</taxon>
        <taxon>Euarchontoglires</taxon>
        <taxon>Glires</taxon>
        <taxon>Rodentia</taxon>
        <taxon>Myomorpha</taxon>
        <taxon>Muroidea</taxon>
        <taxon>Muridae</taxon>
        <taxon>Murinae</taxon>
        <taxon>Mus</taxon>
        <taxon>Coelomys</taxon>
    </lineage>
</organism>
<name>H32_MUSPA</name>
<comment type="function">
    <text>Core component of nucleosome. Nucleosomes wrap and compact DNA into chromatin, limiting DNA accessibility to the cellular machineries which require DNA as a template. Histones thereby play a central role in transcription regulation, DNA repair, DNA replication and chromosomal stability. DNA accessibility is regulated via a complex set of post-translational modifications of histones, also called histone code, and nucleosome remodeling.</text>
</comment>
<comment type="subunit">
    <text evidence="8">The nucleosome is a histone octamer containing two molecules each of H2A, H2B, H3 and H4 assembled in one H3-H4 heterotetramer and two H2A-H2B heterodimers (By similarity). The octamer wraps approximately 147 bp of DNA (By similarity). During nucleosome assembly the chaperone ASF1A interacts with the histone H3-H4 heterodimer (via C-terminus of H3); this interaction is direct (By similarity). Interacts with DNAJC9, CHAF1A and CHAF1B (By similarity). Interacts with NASP; NASP is a histone chaperone that stabilizes and maintains a soluble pool of Histone H3-H4 dimers (By similarity).</text>
</comment>
<comment type="subcellular location">
    <subcellularLocation>
        <location>Nucleus</location>
    </subcellularLocation>
    <subcellularLocation>
        <location>Chromosome</location>
    </subcellularLocation>
</comment>
<comment type="developmental stage">
    <text>Expressed during S phase, then expression strongly decreases as cell division slows down during the process of differentiation.</text>
</comment>
<comment type="PTM">
    <text evidence="8">Acetylation is generally linked to gene activation. Acetylation on Lys-10 (H3K9ac) impairs methylation at Arg-9 (H3R8me2s). Acetylation on Lys-19 (H3K18ac) and Lys-24 (H3K24ac) favors methylation at Arg-18 (H3R17me). Acetylation at Lys-123 (H3K122ac) by EP300/p300 plays a central role in chromatin structure: localizes at the surface of the histone octamer and stimulates transcription, possibly by promoting nucleosome instability.</text>
</comment>
<comment type="PTM">
    <text evidence="8">Citrullination at Arg-9 (H3R8ci) and/or Arg-18 (H3R17ci) by PADI4 impairs methylation and represses transcription.</text>
</comment>
<comment type="PTM">
    <text evidence="8">Asymmetric dimethylation at Arg-18 (H3R17me2a) by CARM1 is linked to gene activation. Symmetric dimethylation at Arg-9 (H3R8me2s) by PRMT5 is linked to gene repression. Asymmetric dimethylation at Arg-3 (H3R2me2a) by PRMT6 is linked to gene repression and is mutually exclusive with H3 Lys-5 methylation (H3K4me2 and H3K4me3). H3R2me2a is present at the 3' of genes regardless of their transcription state and is enriched on inactive promoters, while it is absent on active promoters.</text>
</comment>
<comment type="PTM">
    <text evidence="8">Methylation at Lys-5 (H3K4me), Lys-37 (H3K36me) and Lys-80 (H3K79me) are linked to gene activation. Methylation at Lys-5 (H3K4me) facilitates subsequent acetylation of H3 and H4. Methylation at Lys-80 (H3K79me) is associated with DNA double-strand break (DSB) responses and is a specific target for TP53BP1. Methylation at Lys-10 (H3K9me) and Lys-28 (H3K27me) are linked to gene repression. Methylation at Lys-10 (H3K9me) is a specific target for HP1 proteins (CBX1, CBX3 and CBX5) and prevents subsequent phosphorylation at Ser-11 (H3S10ph) and acetylation of H3 and H4. Methylation at Lys-5 (H3K4me) and Lys-80 (H3K79me) require preliminary monoubiquitination of H2B at 'Lys-120'. Methylation at Lys-10 (H3K9me) and Lys-28 (H3K27me) are enriched in inactive X chromosome chromatin. Monomethylation at Lys-57 (H3K56me1) by EHMT2/G9A in G1 phase promotes interaction with PCNA and is required for DNA replication.</text>
</comment>
<comment type="PTM">
    <text evidence="8">Phosphorylated at Thr-4 (H3T3ph) by VRK1 (By similarity). Phosphorylated at Thr-4 (H3T3ph) by HASPIN during prophase and dephosphorylated during anaphase. Phosphorylation at Ser-11 (H3S10ph) by AURKB is crucial for chromosome condensation and cell-cycle progression during mitosis and meiosis. In addition phosphorylation at Ser-11 (H3S10ph) by RPS6KA4 and RPS6KA5 is important during interphase because it enables the transcription of genes following external stimulation, like mitogens, stress, growth factors or UV irradiation and result in the activation of genes, such as c-fos and c-jun. Phosphorylation at Ser-11 (H3S10ph), which is linked to gene activation, prevents methylation at Lys-10 (H3K9me) but facilitates acetylation of H3 and H4. Phosphorylation at Ser-11 (H3S10ph) by AURKB mediates the dissociation of HP1 proteins (CBX1, CBX3 and CBX5) from heterochromatin. Phosphorylation at Ser-11 (H3S10ph) is also an essential regulatory mechanism for neoplastic cell transformation. Phosphorylated at Ser-29 (H3S28ph) by MAP3K20 isoform 1, RPS6KA5 or AURKB during mitosis or upon ultraviolet B irradiation. Phosphorylation at Thr-7 (H3T6ph) by PRKCB is a specific tag for epigenetic transcriptional activation that prevents demethylation of Lys-5 (H3K4me) by LSD1/KDM1A. At centromeres, specifically phosphorylated at Thr-12 (H3T11ph) from prophase to early anaphase, by DAPK3 and PKN1. Phosphorylation at Thr-12 (H3T11ph) by PKN1 or isoform M2 of PKM (PKM2) is a specific tag for epigenetic transcriptional activation that promotes demethylation of Lys-10 (H3K9me) by KDM4C/JMJD2C. Phosphorylation at Tyr-42 (H3Y41ph) by JAK2 promotes exclusion of CBX5 (HP1 alpha) from chromatin.</text>
</comment>
<comment type="PTM">
    <text evidence="1 8">Monoubiquitinated by RAG1 in lymphoid cells, monoubiquitination is required for V(D)J recombination (By similarity). Ubiquitinated by the CUL4-DDB-RBX1 complex in response to ultraviolet irradiation. This may weaken the interaction between histones and DNA and facilitate DNA accessibility to repair proteins (By similarity).</text>
</comment>
<comment type="PTM">
    <text evidence="8">Lysine deamination at Lys-5 (H3K4all) to form allysine is mediated by LOXL2. Allysine formation by LOXL2 only takes place on H3K4me3 and results in gene repression.</text>
</comment>
<comment type="PTM">
    <text evidence="8">Crotonylation (Kcr) is specifically present in male germ cells and marks testis-specific genes in post-meiotic cells, including X-linked genes that escape sex chromosome inactivation in haploid cells. Crotonylation marks active promoters and enhancers and confers resistance to transcriptional repressors. It is also associated with post-meiotically activated genes on autosomes.</text>
</comment>
<comment type="PTM">
    <text evidence="3">Butyrylation of histones marks active promoters and competes with histone acetylation. It is present during late spermatogenesis.</text>
</comment>
<comment type="PTM">
    <text evidence="8">Succinylation at Lys-80 (H3K79succ) by KAT2A takes place with a maximum frequency around the transcription start sites of genes. It gives a specific tag for epigenetic transcription activation. Desuccinylation at Lys-123 (H3K122succ) by SIRT7 in response to DNA damage promotes chromatin condensation and double-strand breaks (DSBs) repair.</text>
</comment>
<comment type="PTM">
    <text evidence="2">Serine ADP-ribosylation by PARP1 or PARP2 constitutes the primary form of ADP-ribosylation of proteins in response to DNA damage. Serine ADP-ribosylation at Ser-11 (H3S10ADPr) promotes recruitment of CHD1L. H3S10ADPr is mutually exclusive with phosphorylation at Ser-11 (H3S10ph) and impairs acetylation at Lys-10 (H3K9ac).</text>
</comment>
<comment type="PTM">
    <text evidence="8">Serotonylated by TGM2 at Gln-6 (H3Q5ser) during serotonergic neuron differentiation (By similarity). H3Q5ser is associated with trimethylation of Lys-5 (H3K4me3) and enhances general transcription factor IID (TFIID) complex-binding to H3K4me3, thereby facilitating transcription (By similarity).</text>
</comment>
<comment type="PTM">
    <text evidence="7 8">Dopaminylated by TGM2 at Gln-6 (H3Q5dop) in ventral tegmental area (VTA) neurons (By similarity). H3Q5dop mediates neurotransmission-independent role of nuclear dopamine by regulating relapse-related transcriptional plasticity in the reward system (By similarity).</text>
</comment>
<comment type="PTM">
    <text evidence="8">Lactylated in macrophages by EP300/P300 by using lactoyl-CoA directly derived from endogenous or exogenous lactate, leading to stimulates gene transcription.</text>
</comment>
<comment type="similarity">
    <text evidence="10">Belongs to the histone H3 family.</text>
</comment>
<protein>
    <recommendedName>
        <fullName>Histone H3.2</fullName>
    </recommendedName>
</protein>
<proteinExistence type="evidence at transcript level"/>
<gene>
    <name type="primary">H312</name>
</gene>
<feature type="chain" id="PRO_0000253951" description="Histone H3.2">
    <location>
        <begin position="1"/>
        <end position="136"/>
    </location>
</feature>
<feature type="region of interest" description="Disordered" evidence="9">
    <location>
        <begin position="1"/>
        <end position="43"/>
    </location>
</feature>
<feature type="modified residue" description="Asymmetric dimethylarginine; by PRMT6; alternate" evidence="8">
    <location>
        <position position="3"/>
    </location>
</feature>
<feature type="modified residue" description="Citrulline; alternate" evidence="8">
    <location>
        <position position="3"/>
    </location>
</feature>
<feature type="modified residue" description="Phosphothreonine; by HASPIN and VRK1" evidence="8">
    <location>
        <position position="4"/>
    </location>
</feature>
<feature type="modified residue" description="Allysine; alternate" evidence="8">
    <location>
        <position position="5"/>
    </location>
</feature>
<feature type="modified residue" description="N6,N6,N6-trimethyllysine; alternate" evidence="8">
    <location>
        <position position="5"/>
    </location>
</feature>
<feature type="modified residue" description="N6,N6-dimethyllysine; alternate" evidence="8">
    <location>
        <position position="5"/>
    </location>
</feature>
<feature type="modified residue" description="N6-(2-hydroxyisobutyryl)lysine; alternate" evidence="2">
    <location>
        <position position="5"/>
    </location>
</feature>
<feature type="modified residue" description="N6-(beta-hydroxybutyryl)lysine; alternate" evidence="3">
    <location>
        <position position="5"/>
    </location>
</feature>
<feature type="modified residue" description="N6-acetyllysine; alternate" evidence="8">
    <location>
        <position position="5"/>
    </location>
</feature>
<feature type="modified residue" description="N6-crotonyllysine; alternate" evidence="8">
    <location>
        <position position="5"/>
    </location>
</feature>
<feature type="modified residue" description="N6-methyllysine; alternate" evidence="8">
    <location>
        <position position="5"/>
    </location>
</feature>
<feature type="modified residue" description="5-glutamyl dopamine; alternate" evidence="8">
    <location>
        <position position="6"/>
    </location>
</feature>
<feature type="modified residue" description="5-glutamyl serotonin; alternate" evidence="8">
    <location>
        <position position="6"/>
    </location>
</feature>
<feature type="modified residue" description="Phosphothreonine; by PKC" evidence="8">
    <location>
        <position position="7"/>
    </location>
</feature>
<feature type="modified residue" description="Citrulline; alternate" evidence="8">
    <location>
        <position position="9"/>
    </location>
</feature>
<feature type="modified residue" description="Symmetric dimethylarginine; by PRMT5; alternate" evidence="5">
    <location>
        <position position="9"/>
    </location>
</feature>
<feature type="modified residue" description="N6,N6,N6-trimethyllysine; alternate" evidence="8">
    <location>
        <position position="10"/>
    </location>
</feature>
<feature type="modified residue" description="N6,N6-dimethyllysine; alternate" evidence="8">
    <location>
        <position position="10"/>
    </location>
</feature>
<feature type="modified residue" description="N6-(2-hydroxyisobutyryl)lysine; alternate" evidence="2">
    <location>
        <position position="10"/>
    </location>
</feature>
<feature type="modified residue" description="N6-(beta-hydroxybutyryl)lysine; alternate" evidence="3">
    <location>
        <position position="10"/>
    </location>
</feature>
<feature type="modified residue" description="N6-acetyllysine; alternate" evidence="8">
    <location>
        <position position="10"/>
    </location>
</feature>
<feature type="modified residue" description="N6-crotonyllysine; alternate" evidence="8">
    <location>
        <position position="10"/>
    </location>
</feature>
<feature type="modified residue" description="N6-lactoyllysine; alternate" evidence="8">
    <location>
        <position position="10"/>
    </location>
</feature>
<feature type="modified residue" description="N6-methyllysine; alternate" evidence="8">
    <location>
        <position position="10"/>
    </location>
</feature>
<feature type="modified residue" description="ADP-ribosylserine; alternate" evidence="2">
    <location>
        <position position="11"/>
    </location>
</feature>
<feature type="modified residue" description="Phosphoserine; alternate; by AURKB, AURKC, RPS6KA3, RPS6KA4 and RPS6KA5" evidence="4">
    <location>
        <position position="11"/>
    </location>
</feature>
<feature type="modified residue" description="Phosphothreonine; by PKC" evidence="2">
    <location>
        <position position="12"/>
    </location>
</feature>
<feature type="modified residue" description="N6-(2-hydroxyisobutyryl)lysine; alternate" evidence="2">
    <location>
        <position position="15"/>
    </location>
</feature>
<feature type="modified residue" description="N6-(beta-hydroxybutyryl)lysine; alternate" evidence="3">
    <location>
        <position position="15"/>
    </location>
</feature>
<feature type="modified residue" description="N6-acetyllysine; alternate" evidence="8">
    <location>
        <position position="15"/>
    </location>
</feature>
<feature type="modified residue" description="N6-glutaryllysine; alternate" evidence="8">
    <location>
        <position position="15"/>
    </location>
</feature>
<feature type="modified residue" description="N6-lactoyllysine; alternate" evidence="5">
    <location>
        <position position="15"/>
    </location>
</feature>
<feature type="modified residue" description="N6-succinyllysine; alternate" evidence="8">
    <location>
        <position position="15"/>
    </location>
</feature>
<feature type="modified residue" description="Asymmetric dimethylarginine; by CARM1; alternate" evidence="8">
    <location>
        <position position="18"/>
    </location>
</feature>
<feature type="modified residue" description="Citrulline; alternate" evidence="8">
    <location>
        <position position="18"/>
    </location>
</feature>
<feature type="modified residue" description="N6-(2-hydroxyisobutyryl)lysine; alternate" evidence="2">
    <location>
        <position position="19"/>
    </location>
</feature>
<feature type="modified residue" description="N6-(beta-hydroxybutyryl)lysine; alternate" evidence="3">
    <location>
        <position position="19"/>
    </location>
</feature>
<feature type="modified residue" description="N6-acetyllysine; alternate" evidence="8">
    <location>
        <position position="19"/>
    </location>
</feature>
<feature type="modified residue" description="N6-butyryllysine; alternate" evidence="3">
    <location>
        <position position="19"/>
    </location>
</feature>
<feature type="modified residue" description="N6-crotonyllysine; alternate" evidence="8">
    <location>
        <position position="19"/>
    </location>
</feature>
<feature type="modified residue" description="N6-glutaryllysine; alternate" evidence="8">
    <location>
        <position position="19"/>
    </location>
</feature>
<feature type="modified residue" description="N6-lactoyllysine; alternate" evidence="8">
    <location>
        <position position="19"/>
    </location>
</feature>
<feature type="modified residue" description="N6-methyllysine; alternate" evidence="8">
    <location>
        <position position="19"/>
    </location>
</feature>
<feature type="modified residue" description="N6-(2-hydroxyisobutyryl)lysine; alternate" evidence="2">
    <location>
        <position position="24"/>
    </location>
</feature>
<feature type="modified residue" description="N6-(beta-hydroxybutyryl)lysine; alternate" evidence="3">
    <location>
        <position position="24"/>
    </location>
</feature>
<feature type="modified residue" description="N6-acetyllysine; alternate" evidence="8">
    <location>
        <position position="24"/>
    </location>
</feature>
<feature type="modified residue" description="N6-butyryllysine; alternate" evidence="3">
    <location>
        <position position="24"/>
    </location>
</feature>
<feature type="modified residue" description="N6-crotonyllysine; alternate" evidence="8">
    <location>
        <position position="24"/>
    </location>
</feature>
<feature type="modified residue" description="N6-glutaryllysine; alternate" evidence="8">
    <location>
        <position position="24"/>
    </location>
</feature>
<feature type="modified residue" description="N6-lactoyllysine; alternate" evidence="8">
    <location>
        <position position="24"/>
    </location>
</feature>
<feature type="modified residue" description="N6-methyllysine; alternate" evidence="8">
    <location>
        <position position="24"/>
    </location>
</feature>
<feature type="modified residue" description="Citrulline" evidence="8">
    <location>
        <position position="27"/>
    </location>
</feature>
<feature type="modified residue" description="N6,N6,N6-trimethyllysine; alternate" evidence="8">
    <location>
        <position position="28"/>
    </location>
</feature>
<feature type="modified residue" description="N6,N6-dimethyllysine; alternate" evidence="8">
    <location>
        <position position="28"/>
    </location>
</feature>
<feature type="modified residue" description="N6-(2-hydroxyisobutyryl)lysine; alternate" evidence="2">
    <location>
        <position position="28"/>
    </location>
</feature>
<feature type="modified residue" description="N6-acetyllysine; alternate" evidence="8">
    <location>
        <position position="28"/>
    </location>
</feature>
<feature type="modified residue" description="N6-crotonyllysine; alternate" evidence="8">
    <location>
        <position position="28"/>
    </location>
</feature>
<feature type="modified residue" description="N6-glutaryllysine; alternate" evidence="8">
    <location>
        <position position="28"/>
    </location>
</feature>
<feature type="modified residue" description="N6-lactoyllysine; alternate" evidence="8">
    <location>
        <position position="28"/>
    </location>
</feature>
<feature type="modified residue" description="N6-methyllysine; alternate" evidence="8">
    <location>
        <position position="28"/>
    </location>
</feature>
<feature type="modified residue" description="ADP-ribosylserine; alternate" evidence="2">
    <location>
        <position position="29"/>
    </location>
</feature>
<feature type="modified residue" description="Phosphoserine; alternate; by AURKB, AURKC and RPS6KA5" evidence="4">
    <location>
        <position position="29"/>
    </location>
</feature>
<feature type="modified residue" description="N6,N6,N6-trimethyllysine; alternate" evidence="8">
    <location>
        <position position="37"/>
    </location>
</feature>
<feature type="modified residue" description="N6,N6-dimethyllysine; alternate" evidence="8">
    <location>
        <position position="37"/>
    </location>
</feature>
<feature type="modified residue" description="N6-(2-hydroxyisobutyryl)lysine; alternate" evidence="2">
    <location>
        <position position="37"/>
    </location>
</feature>
<feature type="modified residue" description="N6-acetyllysine; alternate" evidence="8">
    <location>
        <position position="37"/>
    </location>
</feature>
<feature type="modified residue" description="N6-methyllysine; alternate" evidence="8">
    <location>
        <position position="37"/>
    </location>
</feature>
<feature type="modified residue" description="N6-methyllysine" evidence="2">
    <location>
        <position position="38"/>
    </location>
</feature>
<feature type="modified residue" description="Phosphotyrosine" evidence="8">
    <location>
        <position position="42"/>
    </location>
</feature>
<feature type="modified residue" description="N6,N6,N6-trimethyllysine; alternate" evidence="8">
    <location>
        <position position="57"/>
    </location>
</feature>
<feature type="modified residue" description="N6-(2-hydroxyisobutyryl)lysine; alternate" evidence="2">
    <location>
        <position position="57"/>
    </location>
</feature>
<feature type="modified residue" description="N6-(beta-hydroxybutyryl)lysine; alternate" evidence="3">
    <location>
        <position position="57"/>
    </location>
</feature>
<feature type="modified residue" description="N6-acetyllysine; alternate" evidence="8">
    <location>
        <position position="57"/>
    </location>
</feature>
<feature type="modified residue" description="N6-crotonyllysine; alternate" evidence="8">
    <location>
        <position position="57"/>
    </location>
</feature>
<feature type="modified residue" description="N6-glutaryllysine; alternate" evidence="8">
    <location>
        <position position="57"/>
    </location>
</feature>
<feature type="modified residue" description="N6-lactoyllysine; alternate" evidence="5">
    <location>
        <position position="57"/>
    </location>
</feature>
<feature type="modified residue" description="N6-methyllysine; by EHMT2; alternate" evidence="8">
    <location>
        <position position="57"/>
    </location>
</feature>
<feature type="modified residue" description="N6-succinyllysine; alternate" evidence="8">
    <location>
        <position position="57"/>
    </location>
</feature>
<feature type="modified residue" description="Phosphoserine" evidence="8">
    <location>
        <position position="58"/>
    </location>
</feature>
<feature type="modified residue" description="N6-(2-hydroxyisobutyryl)lysine; alternate" evidence="2">
    <location>
        <position position="65"/>
    </location>
</feature>
<feature type="modified residue" description="N6-methyllysine; alternate" evidence="8">
    <location>
        <position position="65"/>
    </location>
</feature>
<feature type="modified residue" description="N6,N6,N6-trimethyllysine; alternate" evidence="5">
    <location>
        <position position="80"/>
    </location>
</feature>
<feature type="modified residue" description="N6,N6-dimethyllysine; alternate" evidence="8">
    <location>
        <position position="80"/>
    </location>
</feature>
<feature type="modified residue" description="N6-(2-hydroxyisobutyryl)lysine; alternate" evidence="2">
    <location>
        <position position="80"/>
    </location>
</feature>
<feature type="modified residue" description="N6-acetyllysine; alternate" evidence="8">
    <location>
        <position position="80"/>
    </location>
</feature>
<feature type="modified residue" description="N6-glutaryllysine; alternate" evidence="8">
    <location>
        <position position="80"/>
    </location>
</feature>
<feature type="modified residue" description="N6-lactoyllysine; alternate" evidence="8">
    <location>
        <position position="80"/>
    </location>
</feature>
<feature type="modified residue" description="N6-methyllysine; alternate" evidence="8">
    <location>
        <position position="80"/>
    </location>
</feature>
<feature type="modified residue" description="N6-succinyllysine; alternate" evidence="8">
    <location>
        <position position="80"/>
    </location>
</feature>
<feature type="modified residue" description="Phosphothreonine" evidence="8">
    <location>
        <position position="81"/>
    </location>
</feature>
<feature type="modified residue" description="Phosphoserine" evidence="6">
    <location>
        <position position="87"/>
    </location>
</feature>
<feature type="modified residue" description="Phosphothreonine" evidence="8">
    <location>
        <position position="108"/>
    </location>
</feature>
<feature type="modified residue" description="N6-acetyllysine; alternate" evidence="8">
    <location>
        <position position="116"/>
    </location>
</feature>
<feature type="modified residue" description="N6-glutaryllysine; alternate" evidence="8">
    <location>
        <position position="116"/>
    </location>
</feature>
<feature type="modified residue" description="N6-(2-hydroxyisobutyryl)lysine; alternate" evidence="2">
    <location>
        <position position="123"/>
    </location>
</feature>
<feature type="modified residue" description="N6-acetyllysine; alternate" evidence="8">
    <location>
        <position position="123"/>
    </location>
</feature>
<feature type="modified residue" description="N6-glutaryllysine; alternate" evidence="8">
    <location>
        <position position="123"/>
    </location>
</feature>
<feature type="modified residue" description="N6-methyllysine; alternate" evidence="8">
    <location>
        <position position="123"/>
    </location>
</feature>
<feature type="modified residue" description="N6-succinyllysine; alternate" evidence="8">
    <location>
        <position position="123"/>
    </location>
</feature>
<feature type="lipid moiety-binding region" description="N6-decanoyllysine" evidence="8">
    <location>
        <position position="19"/>
    </location>
</feature>
<feature type="lipid moiety-binding region" description="S-palmitoyl cysteine" evidence="8">
    <location>
        <position position="111"/>
    </location>
</feature>
<reference key="1">
    <citation type="journal article" date="1994" name="Genetics">
        <title>Selection on silent sites in the rodent histone H3 gene family.</title>
        <authorList>
            <person name="DeBry R.W."/>
            <person name="Marzluff W.F."/>
        </authorList>
    </citation>
    <scope>NUCLEOTIDE SEQUENCE [GENOMIC DNA]</scope>
</reference>
<evidence type="ECO:0000250" key="1"/>
<evidence type="ECO:0000250" key="2">
    <source>
        <dbReference type="UniProtKB" id="P68431"/>
    </source>
</evidence>
<evidence type="ECO:0000250" key="3">
    <source>
        <dbReference type="UniProtKB" id="P68433"/>
    </source>
</evidence>
<evidence type="ECO:0000250" key="4">
    <source>
        <dbReference type="UniProtKB" id="P84227"/>
    </source>
</evidence>
<evidence type="ECO:0000250" key="5">
    <source>
        <dbReference type="UniProtKB" id="P84228"/>
    </source>
</evidence>
<evidence type="ECO:0000250" key="6">
    <source>
        <dbReference type="UniProtKB" id="P84243"/>
    </source>
</evidence>
<evidence type="ECO:0000250" key="7">
    <source>
        <dbReference type="UniProtKB" id="P84245"/>
    </source>
</evidence>
<evidence type="ECO:0000250" key="8">
    <source>
        <dbReference type="UniProtKB" id="Q71DI3"/>
    </source>
</evidence>
<evidence type="ECO:0000256" key="9">
    <source>
        <dbReference type="SAM" id="MobiDB-lite"/>
    </source>
</evidence>
<evidence type="ECO:0000305" key="10"/>
<keyword id="KW-0007">Acetylation</keyword>
<keyword id="KW-0013">ADP-ribosylation</keyword>
<keyword id="KW-0158">Chromosome</keyword>
<keyword id="KW-0164">Citrullination</keyword>
<keyword id="KW-0238">DNA-binding</keyword>
<keyword id="KW-0379">Hydroxylation</keyword>
<keyword id="KW-0449">Lipoprotein</keyword>
<keyword id="KW-0488">Methylation</keyword>
<keyword id="KW-0544">Nucleosome core</keyword>
<keyword id="KW-0539">Nucleus</keyword>
<keyword id="KW-0564">Palmitate</keyword>
<keyword id="KW-0597">Phosphoprotein</keyword>
<keyword id="KW-0832">Ubl conjugation</keyword>
<dbReference type="EMBL" id="X80326">
    <property type="protein sequence ID" value="CAA56573.1"/>
    <property type="molecule type" value="Genomic_DNA"/>
</dbReference>
<dbReference type="SMR" id="Q6LBE8"/>
<dbReference type="GO" id="GO:0000786">
    <property type="term" value="C:nucleosome"/>
    <property type="evidence" value="ECO:0007669"/>
    <property type="project" value="UniProtKB-KW"/>
</dbReference>
<dbReference type="GO" id="GO:0005634">
    <property type="term" value="C:nucleus"/>
    <property type="evidence" value="ECO:0007669"/>
    <property type="project" value="UniProtKB-SubCell"/>
</dbReference>
<dbReference type="GO" id="GO:0003682">
    <property type="term" value="F:chromatin binding"/>
    <property type="evidence" value="ECO:0007669"/>
    <property type="project" value="Ensembl"/>
</dbReference>
<dbReference type="GO" id="GO:0003677">
    <property type="term" value="F:DNA binding"/>
    <property type="evidence" value="ECO:0007669"/>
    <property type="project" value="UniProtKB-KW"/>
</dbReference>
<dbReference type="GO" id="GO:0046982">
    <property type="term" value="F:protein heterodimerization activity"/>
    <property type="evidence" value="ECO:0007669"/>
    <property type="project" value="InterPro"/>
</dbReference>
<dbReference type="GO" id="GO:0030527">
    <property type="term" value="F:structural constituent of chromatin"/>
    <property type="evidence" value="ECO:0007669"/>
    <property type="project" value="InterPro"/>
</dbReference>
<dbReference type="GO" id="GO:0010467">
    <property type="term" value="P:gene expression"/>
    <property type="evidence" value="ECO:0007669"/>
    <property type="project" value="Ensembl"/>
</dbReference>
<dbReference type="GO" id="GO:0000122">
    <property type="term" value="P:negative regulation of transcription by RNA polymerase II"/>
    <property type="evidence" value="ECO:0007669"/>
    <property type="project" value="Ensembl"/>
</dbReference>
<dbReference type="CDD" id="cd22911">
    <property type="entry name" value="HFD_H3"/>
    <property type="match status" value="1"/>
</dbReference>
<dbReference type="FunFam" id="1.10.20.10:FF:000078">
    <property type="entry name" value="Histone H3"/>
    <property type="match status" value="1"/>
</dbReference>
<dbReference type="FunFam" id="1.10.20.10:FF:000044">
    <property type="entry name" value="Histone H3.3"/>
    <property type="match status" value="1"/>
</dbReference>
<dbReference type="Gene3D" id="1.10.20.10">
    <property type="entry name" value="Histone, subunit A"/>
    <property type="match status" value="1"/>
</dbReference>
<dbReference type="InterPro" id="IPR009072">
    <property type="entry name" value="Histone-fold"/>
</dbReference>
<dbReference type="InterPro" id="IPR007125">
    <property type="entry name" value="Histone_H2A/H2B/H3"/>
</dbReference>
<dbReference type="InterPro" id="IPR000164">
    <property type="entry name" value="Histone_H3/CENP-A"/>
</dbReference>
<dbReference type="PANTHER" id="PTHR11426">
    <property type="entry name" value="HISTONE H3"/>
    <property type="match status" value="1"/>
</dbReference>
<dbReference type="Pfam" id="PF00125">
    <property type="entry name" value="Histone"/>
    <property type="match status" value="1"/>
</dbReference>
<dbReference type="PRINTS" id="PR00622">
    <property type="entry name" value="HISTONEH3"/>
</dbReference>
<dbReference type="SMART" id="SM00428">
    <property type="entry name" value="H3"/>
    <property type="match status" value="1"/>
</dbReference>
<dbReference type="SUPFAM" id="SSF47113">
    <property type="entry name" value="Histone-fold"/>
    <property type="match status" value="1"/>
</dbReference>
<dbReference type="PROSITE" id="PS00322">
    <property type="entry name" value="HISTONE_H3_1"/>
    <property type="match status" value="1"/>
</dbReference>
<dbReference type="PROSITE" id="PS00959">
    <property type="entry name" value="HISTONE_H3_2"/>
    <property type="match status" value="1"/>
</dbReference>
<accession>Q6LBE8</accession>
<sequence length="136" mass="15388">MARTKQTARKSTGGKAPRKQLATKAARKSAPATGGVKKPHRYRPGTVALREIRRYQKSTELLIRKLPFQRLVREIAQDFKTDLRFQSSAVMALQEASEAYLVGLFEDTNLCAIHAKRVTIMPKDIQLARRIRGERA</sequence>